<protein>
    <recommendedName>
        <fullName evidence="1">Adenine phosphoribosyltransferase</fullName>
        <shortName>APRT</shortName>
        <ecNumber evidence="1">2.4.2.7</ecNumber>
    </recommendedName>
</protein>
<reference key="1">
    <citation type="journal article" date="1993" name="EMBO J.">
        <title>8-methoxypsoralen induced mutations are highly targeted at crosslinkable sites of photoaddition on the non-transcribed strand of a mammalian chromosomal gene.</title>
        <authorList>
            <person name="Sage E."/>
            <person name="Drobetsky E.A."/>
            <person name="Moustacchi E."/>
        </authorList>
    </citation>
    <scope>NUCLEOTIDE SEQUENCE [GENOMIC DNA]</scope>
    <source>
        <tissue>Ovary</tissue>
    </source>
</reference>
<dbReference type="EC" id="2.4.2.7" evidence="1"/>
<dbReference type="EMBL" id="X58958">
    <property type="protein sequence ID" value="CAA41729.1"/>
    <property type="molecule type" value="Genomic_DNA"/>
</dbReference>
<dbReference type="EMBL" id="X58959">
    <property type="protein sequence ID" value="CAA41729.1"/>
    <property type="status" value="JOINED"/>
    <property type="molecule type" value="Genomic_DNA"/>
</dbReference>
<dbReference type="EMBL" id="X58960">
    <property type="protein sequence ID" value="CAA41729.1"/>
    <property type="status" value="JOINED"/>
    <property type="molecule type" value="Genomic_DNA"/>
</dbReference>
<dbReference type="EMBL" id="X58961">
    <property type="protein sequence ID" value="CAA41729.1"/>
    <property type="status" value="JOINED"/>
    <property type="molecule type" value="Genomic_DNA"/>
</dbReference>
<dbReference type="EMBL" id="X58962">
    <property type="protein sequence ID" value="CAA41729.1"/>
    <property type="status" value="JOINED"/>
    <property type="molecule type" value="Genomic_DNA"/>
</dbReference>
<dbReference type="RefSeq" id="XP_003495138.1">
    <property type="nucleotide sequence ID" value="XM_003495090.2"/>
</dbReference>
<dbReference type="RefSeq" id="XP_007622098.1">
    <property type="nucleotide sequence ID" value="XM_007623908.1"/>
</dbReference>
<dbReference type="SMR" id="P47952"/>
<dbReference type="PaxDb" id="10029-XP_007622098.1"/>
<dbReference type="Ensembl" id="ENSCGRT00001010906.1">
    <property type="protein sequence ID" value="ENSCGRP00001006920.1"/>
    <property type="gene ID" value="ENSCGRG00001009398.1"/>
</dbReference>
<dbReference type="GeneID" id="100765665"/>
<dbReference type="CTD" id="353"/>
<dbReference type="eggNOG" id="KOG1712">
    <property type="taxonomic scope" value="Eukaryota"/>
</dbReference>
<dbReference type="GeneTree" id="ENSGT00390000017259"/>
<dbReference type="OMA" id="QAYDLEY"/>
<dbReference type="OrthoDB" id="363185at2759"/>
<dbReference type="UniPathway" id="UPA00588">
    <property type="reaction ID" value="UER00646"/>
</dbReference>
<dbReference type="Proteomes" id="UP000694386">
    <property type="component" value="Unplaced"/>
</dbReference>
<dbReference type="Proteomes" id="UP001108280">
    <property type="component" value="Unplaced"/>
</dbReference>
<dbReference type="GO" id="GO:0005829">
    <property type="term" value="C:cytosol"/>
    <property type="evidence" value="ECO:0007669"/>
    <property type="project" value="Ensembl"/>
</dbReference>
<dbReference type="GO" id="GO:0005654">
    <property type="term" value="C:nucleoplasm"/>
    <property type="evidence" value="ECO:0007669"/>
    <property type="project" value="Ensembl"/>
</dbReference>
<dbReference type="GO" id="GO:0002055">
    <property type="term" value="F:adenine binding"/>
    <property type="evidence" value="ECO:0007669"/>
    <property type="project" value="Ensembl"/>
</dbReference>
<dbReference type="GO" id="GO:0003999">
    <property type="term" value="F:adenine phosphoribosyltransferase activity"/>
    <property type="evidence" value="ECO:0000250"/>
    <property type="project" value="UniProtKB"/>
</dbReference>
<dbReference type="GO" id="GO:0016208">
    <property type="term" value="F:AMP binding"/>
    <property type="evidence" value="ECO:0007669"/>
    <property type="project" value="Ensembl"/>
</dbReference>
<dbReference type="GO" id="GO:0006168">
    <property type="term" value="P:adenine salvage"/>
    <property type="evidence" value="ECO:0007669"/>
    <property type="project" value="InterPro"/>
</dbReference>
<dbReference type="GO" id="GO:0044209">
    <property type="term" value="P:AMP salvage"/>
    <property type="evidence" value="ECO:0007669"/>
    <property type="project" value="UniProtKB-UniPathway"/>
</dbReference>
<dbReference type="GO" id="GO:0032263">
    <property type="term" value="P:GMP salvage"/>
    <property type="evidence" value="ECO:0007669"/>
    <property type="project" value="Ensembl"/>
</dbReference>
<dbReference type="GO" id="GO:0007625">
    <property type="term" value="P:grooming behavior"/>
    <property type="evidence" value="ECO:0007669"/>
    <property type="project" value="Ensembl"/>
</dbReference>
<dbReference type="GO" id="GO:0032264">
    <property type="term" value="P:IMP salvage"/>
    <property type="evidence" value="ECO:0007669"/>
    <property type="project" value="Ensembl"/>
</dbReference>
<dbReference type="GO" id="GO:0006166">
    <property type="term" value="P:purine ribonucleoside salvage"/>
    <property type="evidence" value="ECO:0007669"/>
    <property type="project" value="UniProtKB-KW"/>
</dbReference>
<dbReference type="CDD" id="cd06223">
    <property type="entry name" value="PRTases_typeI"/>
    <property type="match status" value="1"/>
</dbReference>
<dbReference type="FunFam" id="3.40.50.2020:FF:000123">
    <property type="entry name" value="Adenine phosphoribosyltransferase"/>
    <property type="match status" value="1"/>
</dbReference>
<dbReference type="Gene3D" id="3.40.50.2020">
    <property type="match status" value="1"/>
</dbReference>
<dbReference type="HAMAP" id="MF_00004">
    <property type="entry name" value="Aden_phosphoribosyltr"/>
    <property type="match status" value="1"/>
</dbReference>
<dbReference type="InterPro" id="IPR005764">
    <property type="entry name" value="Ade_phspho_trans"/>
</dbReference>
<dbReference type="InterPro" id="IPR000836">
    <property type="entry name" value="PRibTrfase_dom"/>
</dbReference>
<dbReference type="InterPro" id="IPR029057">
    <property type="entry name" value="PRTase-like"/>
</dbReference>
<dbReference type="InterPro" id="IPR050054">
    <property type="entry name" value="UPRTase/APRTase"/>
</dbReference>
<dbReference type="NCBIfam" id="TIGR01090">
    <property type="entry name" value="apt"/>
    <property type="match status" value="1"/>
</dbReference>
<dbReference type="NCBIfam" id="NF002634">
    <property type="entry name" value="PRK02304.1-3"/>
    <property type="match status" value="1"/>
</dbReference>
<dbReference type="NCBIfam" id="NF002636">
    <property type="entry name" value="PRK02304.1-5"/>
    <property type="match status" value="1"/>
</dbReference>
<dbReference type="PANTHER" id="PTHR32315">
    <property type="entry name" value="ADENINE PHOSPHORIBOSYLTRANSFERASE"/>
    <property type="match status" value="1"/>
</dbReference>
<dbReference type="PANTHER" id="PTHR32315:SF3">
    <property type="entry name" value="ADENINE PHOSPHORIBOSYLTRANSFERASE"/>
    <property type="match status" value="1"/>
</dbReference>
<dbReference type="Pfam" id="PF00156">
    <property type="entry name" value="Pribosyltran"/>
    <property type="match status" value="1"/>
</dbReference>
<dbReference type="SUPFAM" id="SSF53271">
    <property type="entry name" value="PRTase-like"/>
    <property type="match status" value="1"/>
</dbReference>
<dbReference type="PROSITE" id="PS00103">
    <property type="entry name" value="PUR_PYR_PR_TRANSFER"/>
    <property type="match status" value="1"/>
</dbReference>
<feature type="initiator methionine" description="Removed" evidence="1">
    <location>
        <position position="1"/>
    </location>
</feature>
<feature type="chain" id="PRO_0000149502" description="Adenine phosphoribosyltransferase">
    <location>
        <begin position="2"/>
        <end position="180"/>
    </location>
</feature>
<feature type="modified residue" description="N-acetylalanine" evidence="1">
    <location>
        <position position="2"/>
    </location>
</feature>
<feature type="modified residue" description="Phosphoserine" evidence="1">
    <location>
        <position position="4"/>
    </location>
</feature>
<feature type="modified residue" description="Phosphoserine" evidence="1">
    <location>
        <position position="15"/>
    </location>
</feature>
<feature type="modified residue" description="Phosphoserine" evidence="1">
    <location>
        <position position="30"/>
    </location>
</feature>
<feature type="modified residue" description="Phosphotyrosine" evidence="1">
    <location>
        <position position="60"/>
    </location>
</feature>
<feature type="modified residue" description="Phosphoserine" evidence="1">
    <location>
        <position position="66"/>
    </location>
</feature>
<feature type="modified residue" description="N6-acetyllysine" evidence="1">
    <location>
        <position position="114"/>
    </location>
</feature>
<feature type="modified residue" description="Phosphothreonine" evidence="1">
    <location>
        <position position="135"/>
    </location>
</feature>
<name>APT_CRIGR</name>
<keyword id="KW-0007">Acetylation</keyword>
<keyword id="KW-0963">Cytoplasm</keyword>
<keyword id="KW-0328">Glycosyltransferase</keyword>
<keyword id="KW-0597">Phosphoprotein</keyword>
<keyword id="KW-0660">Purine salvage</keyword>
<keyword id="KW-0808">Transferase</keyword>
<organism>
    <name type="scientific">Cricetulus griseus</name>
    <name type="common">Chinese hamster</name>
    <name type="synonym">Cricetulus barabensis griseus</name>
    <dbReference type="NCBI Taxonomy" id="10029"/>
    <lineage>
        <taxon>Eukaryota</taxon>
        <taxon>Metazoa</taxon>
        <taxon>Chordata</taxon>
        <taxon>Craniata</taxon>
        <taxon>Vertebrata</taxon>
        <taxon>Euteleostomi</taxon>
        <taxon>Mammalia</taxon>
        <taxon>Eutheria</taxon>
        <taxon>Euarchontoglires</taxon>
        <taxon>Glires</taxon>
        <taxon>Rodentia</taxon>
        <taxon>Myomorpha</taxon>
        <taxon>Muroidea</taxon>
        <taxon>Cricetidae</taxon>
        <taxon>Cricetinae</taxon>
        <taxon>Cricetulus</taxon>
    </lineage>
</organism>
<evidence type="ECO:0000250" key="1">
    <source>
        <dbReference type="UniProtKB" id="P07741"/>
    </source>
</evidence>
<evidence type="ECO:0000305" key="2"/>
<gene>
    <name evidence="1" type="primary">APRT</name>
</gene>
<sequence>MAESELQLVAQRIRSFPDFPIPGVLFRDISPLLKDPASFRASIRLLASHLKSTHGGKIDYIAGLDSRGFLFGPSLAQELGLGCVLIRKRGKLPGPTVSASYALEYGKAELEIQKDALEPGQKVVVVDDLLATGGTMCAACELLGQLQAEVVECVSLVELTSLKGREKLGSVPFFSLLQYE</sequence>
<comment type="function">
    <text evidence="1">Catalyzes a salvage reaction resulting in the formation of AMP, that is energically less costly than de novo synthesis.</text>
</comment>
<comment type="catalytic activity">
    <reaction evidence="1">
        <text>AMP + diphosphate = 5-phospho-alpha-D-ribose 1-diphosphate + adenine</text>
        <dbReference type="Rhea" id="RHEA:16609"/>
        <dbReference type="ChEBI" id="CHEBI:16708"/>
        <dbReference type="ChEBI" id="CHEBI:33019"/>
        <dbReference type="ChEBI" id="CHEBI:58017"/>
        <dbReference type="ChEBI" id="CHEBI:456215"/>
        <dbReference type="EC" id="2.4.2.7"/>
    </reaction>
</comment>
<comment type="pathway">
    <text evidence="1">Purine metabolism; AMP biosynthesis via salvage pathway; AMP from adenine: step 1/1.</text>
</comment>
<comment type="subunit">
    <text>Homodimer.</text>
</comment>
<comment type="subcellular location">
    <subcellularLocation>
        <location>Cytoplasm</location>
    </subcellularLocation>
</comment>
<comment type="similarity">
    <text evidence="2">Belongs to the purine/pyrimidine phosphoribosyltransferase family.</text>
</comment>
<accession>P47952</accession>
<proteinExistence type="inferred from homology"/>